<protein>
    <recommendedName>
        <fullName>Actin-related protein 6</fullName>
        <shortName>hArp6</shortName>
    </recommendedName>
    <alternativeName>
        <fullName>hARPX</fullName>
    </alternativeName>
</protein>
<reference key="1">
    <citation type="journal article" date="2001" name="Gene">
        <title>Novel actin-related proteins in vertebrates: similarities of structure and expression pattern to Arp6 localized on Drosophila heterochromatin.</title>
        <authorList>
            <person name="Kato M."/>
            <person name="Sasaki M."/>
            <person name="Mizuno S."/>
            <person name="Harata M."/>
        </authorList>
    </citation>
    <scope>NUCLEOTIDE SEQUENCE [MRNA] (ISOFORM 1)</scope>
    <source>
        <tissue>Brain</tissue>
    </source>
</reference>
<reference key="2">
    <citation type="submission" date="1999-12" db="EMBL/GenBank/DDBJ databases">
        <title>A novel gene expressed in human pheochromocytoma.</title>
        <authorList>
            <person name="Li Y."/>
            <person name="Huang Q."/>
            <person name="Peng Y."/>
            <person name="Song H."/>
            <person name="Yu Y."/>
            <person name="Xu S."/>
            <person name="Ren S."/>
            <person name="Chen Z."/>
            <person name="Han Z."/>
        </authorList>
    </citation>
    <scope>NUCLEOTIDE SEQUENCE [LARGE SCALE MRNA] (ISOFORM 1)</scope>
    <source>
        <tissue>Pheochromocytoma</tissue>
    </source>
</reference>
<reference key="3">
    <citation type="journal article" date="2004" name="Nat. Genet.">
        <title>Complete sequencing and characterization of 21,243 full-length human cDNAs.</title>
        <authorList>
            <person name="Ota T."/>
            <person name="Suzuki Y."/>
            <person name="Nishikawa T."/>
            <person name="Otsuki T."/>
            <person name="Sugiyama T."/>
            <person name="Irie R."/>
            <person name="Wakamatsu A."/>
            <person name="Hayashi K."/>
            <person name="Sato H."/>
            <person name="Nagai K."/>
            <person name="Kimura K."/>
            <person name="Makita H."/>
            <person name="Sekine M."/>
            <person name="Obayashi M."/>
            <person name="Nishi T."/>
            <person name="Shibahara T."/>
            <person name="Tanaka T."/>
            <person name="Ishii S."/>
            <person name="Yamamoto J."/>
            <person name="Saito K."/>
            <person name="Kawai Y."/>
            <person name="Isono Y."/>
            <person name="Nakamura Y."/>
            <person name="Nagahari K."/>
            <person name="Murakami K."/>
            <person name="Yasuda T."/>
            <person name="Iwayanagi T."/>
            <person name="Wagatsuma M."/>
            <person name="Shiratori A."/>
            <person name="Sudo H."/>
            <person name="Hosoiri T."/>
            <person name="Kaku Y."/>
            <person name="Kodaira H."/>
            <person name="Kondo H."/>
            <person name="Sugawara M."/>
            <person name="Takahashi M."/>
            <person name="Kanda K."/>
            <person name="Yokoi T."/>
            <person name="Furuya T."/>
            <person name="Kikkawa E."/>
            <person name="Omura Y."/>
            <person name="Abe K."/>
            <person name="Kamihara K."/>
            <person name="Katsuta N."/>
            <person name="Sato K."/>
            <person name="Tanikawa M."/>
            <person name="Yamazaki M."/>
            <person name="Ninomiya K."/>
            <person name="Ishibashi T."/>
            <person name="Yamashita H."/>
            <person name="Murakawa K."/>
            <person name="Fujimori K."/>
            <person name="Tanai H."/>
            <person name="Kimata M."/>
            <person name="Watanabe M."/>
            <person name="Hiraoka S."/>
            <person name="Chiba Y."/>
            <person name="Ishida S."/>
            <person name="Ono Y."/>
            <person name="Takiguchi S."/>
            <person name="Watanabe S."/>
            <person name="Yosida M."/>
            <person name="Hotuta T."/>
            <person name="Kusano J."/>
            <person name="Kanehori K."/>
            <person name="Takahashi-Fujii A."/>
            <person name="Hara H."/>
            <person name="Tanase T.-O."/>
            <person name="Nomura Y."/>
            <person name="Togiya S."/>
            <person name="Komai F."/>
            <person name="Hara R."/>
            <person name="Takeuchi K."/>
            <person name="Arita M."/>
            <person name="Imose N."/>
            <person name="Musashino K."/>
            <person name="Yuuki H."/>
            <person name="Oshima A."/>
            <person name="Sasaki N."/>
            <person name="Aotsuka S."/>
            <person name="Yoshikawa Y."/>
            <person name="Matsunawa H."/>
            <person name="Ichihara T."/>
            <person name="Shiohata N."/>
            <person name="Sano S."/>
            <person name="Moriya S."/>
            <person name="Momiyama H."/>
            <person name="Satoh N."/>
            <person name="Takami S."/>
            <person name="Terashima Y."/>
            <person name="Suzuki O."/>
            <person name="Nakagawa S."/>
            <person name="Senoh A."/>
            <person name="Mizoguchi H."/>
            <person name="Goto Y."/>
            <person name="Shimizu F."/>
            <person name="Wakebe H."/>
            <person name="Hishigaki H."/>
            <person name="Watanabe T."/>
            <person name="Sugiyama A."/>
            <person name="Takemoto M."/>
            <person name="Kawakami B."/>
            <person name="Yamazaki M."/>
            <person name="Watanabe K."/>
            <person name="Kumagai A."/>
            <person name="Itakura S."/>
            <person name="Fukuzumi Y."/>
            <person name="Fujimori Y."/>
            <person name="Komiyama M."/>
            <person name="Tashiro H."/>
            <person name="Tanigami A."/>
            <person name="Fujiwara T."/>
            <person name="Ono T."/>
            <person name="Yamada K."/>
            <person name="Fujii Y."/>
            <person name="Ozaki K."/>
            <person name="Hirao M."/>
            <person name="Ohmori Y."/>
            <person name="Kawabata A."/>
            <person name="Hikiji T."/>
            <person name="Kobatake N."/>
            <person name="Inagaki H."/>
            <person name="Ikema Y."/>
            <person name="Okamoto S."/>
            <person name="Okitani R."/>
            <person name="Kawakami T."/>
            <person name="Noguchi S."/>
            <person name="Itoh T."/>
            <person name="Shigeta K."/>
            <person name="Senba T."/>
            <person name="Matsumura K."/>
            <person name="Nakajima Y."/>
            <person name="Mizuno T."/>
            <person name="Morinaga M."/>
            <person name="Sasaki M."/>
            <person name="Togashi T."/>
            <person name="Oyama M."/>
            <person name="Hata H."/>
            <person name="Watanabe M."/>
            <person name="Komatsu T."/>
            <person name="Mizushima-Sugano J."/>
            <person name="Satoh T."/>
            <person name="Shirai Y."/>
            <person name="Takahashi Y."/>
            <person name="Nakagawa K."/>
            <person name="Okumura K."/>
            <person name="Nagase T."/>
            <person name="Nomura N."/>
            <person name="Kikuchi H."/>
            <person name="Masuho Y."/>
            <person name="Yamashita R."/>
            <person name="Nakai K."/>
            <person name="Yada T."/>
            <person name="Nakamura Y."/>
            <person name="Ohara O."/>
            <person name="Isogai T."/>
            <person name="Sugano S."/>
        </authorList>
    </citation>
    <scope>NUCLEOTIDE SEQUENCE [LARGE SCALE MRNA] (ISOFORMS 1 AND 2)</scope>
    <source>
        <tissue>Mammary gland</tissue>
        <tissue>Placenta</tissue>
        <tissue>Tongue</tissue>
    </source>
</reference>
<reference key="4">
    <citation type="submission" date="2005-04" db="EMBL/GenBank/DDBJ databases">
        <authorList>
            <person name="Suzuki Y."/>
            <person name="Sugano S."/>
            <person name="Totoki Y."/>
            <person name="Toyoda A."/>
            <person name="Takeda T."/>
            <person name="Sakaki Y."/>
            <person name="Tanaka A."/>
            <person name="Yokoyama S."/>
        </authorList>
    </citation>
    <scope>NUCLEOTIDE SEQUENCE [LARGE SCALE MRNA] (ISOFORM 1)</scope>
    <source>
        <tissue>Small intestine</tissue>
    </source>
</reference>
<reference key="5">
    <citation type="submission" date="2005-07" db="EMBL/GenBank/DDBJ databases">
        <authorList>
            <person name="Mural R.J."/>
            <person name="Istrail S."/>
            <person name="Sutton G.G."/>
            <person name="Florea L."/>
            <person name="Halpern A.L."/>
            <person name="Mobarry C.M."/>
            <person name="Lippert R."/>
            <person name="Walenz B."/>
            <person name="Shatkay H."/>
            <person name="Dew I."/>
            <person name="Miller J.R."/>
            <person name="Flanigan M.J."/>
            <person name="Edwards N.J."/>
            <person name="Bolanos R."/>
            <person name="Fasulo D."/>
            <person name="Halldorsson B.V."/>
            <person name="Hannenhalli S."/>
            <person name="Turner R."/>
            <person name="Yooseph S."/>
            <person name="Lu F."/>
            <person name="Nusskern D.R."/>
            <person name="Shue B.C."/>
            <person name="Zheng X.H."/>
            <person name="Zhong F."/>
            <person name="Delcher A.L."/>
            <person name="Huson D.H."/>
            <person name="Kravitz S.A."/>
            <person name="Mouchard L."/>
            <person name="Reinert K."/>
            <person name="Remington K.A."/>
            <person name="Clark A.G."/>
            <person name="Waterman M.S."/>
            <person name="Eichler E.E."/>
            <person name="Adams M.D."/>
            <person name="Hunkapiller M.W."/>
            <person name="Myers E.W."/>
            <person name="Venter J.C."/>
        </authorList>
    </citation>
    <scope>NUCLEOTIDE SEQUENCE [LARGE SCALE GENOMIC DNA]</scope>
</reference>
<reference key="6">
    <citation type="journal article" date="2004" name="Genome Res.">
        <title>The status, quality, and expansion of the NIH full-length cDNA project: the Mammalian Gene Collection (MGC).</title>
        <authorList>
            <consortium name="The MGC Project Team"/>
        </authorList>
    </citation>
    <scope>NUCLEOTIDE SEQUENCE [LARGE SCALE MRNA] (ISOFORM 1)</scope>
    <source>
        <tissue>Urinary bladder</tissue>
    </source>
</reference>
<reference key="7">
    <citation type="journal article" date="2005" name="J. Biol. Chem.">
        <title>The mammalian YL1 protein is a shared subunit of the TRRAP/TIP60 histone acetyltransferase and SRCAP complexes.</title>
        <authorList>
            <person name="Cai Y."/>
            <person name="Jin J."/>
            <person name="Florens L."/>
            <person name="Swanson S.K."/>
            <person name="Kusch T."/>
            <person name="Li B."/>
            <person name="Workman J.L."/>
            <person name="Washburn M.P."/>
            <person name="Conaway R.C."/>
            <person name="Conaway J.W."/>
        </authorList>
    </citation>
    <scope>IDENTIFICATION IN THE SRCAP COMPLEX</scope>
</reference>
<reference key="8">
    <citation type="journal article" date="2006" name="Eur. J. Cell Biol.">
        <title>Vertebrate Arp6, a novel nuclear actin-related protein, interacts with heterochromatin protein 1.</title>
        <authorList>
            <person name="Ohfuchi E."/>
            <person name="Kato M."/>
            <person name="Sasaki M."/>
            <person name="Sugimoto K."/>
            <person name="Oma Y."/>
            <person name="Harata M."/>
        </authorList>
    </citation>
    <scope>SUBCELLULAR LOCATION</scope>
    <scope>INTERACTION WITH CBX1; CBX3 AND CBX5</scope>
</reference>
<reference key="9">
    <citation type="journal article" date="2009" name="Anal. Chem.">
        <title>Lys-N and trypsin cover complementary parts of the phosphoproteome in a refined SCX-based approach.</title>
        <authorList>
            <person name="Gauci S."/>
            <person name="Helbig A.O."/>
            <person name="Slijper M."/>
            <person name="Krijgsveld J."/>
            <person name="Heck A.J."/>
            <person name="Mohammed S."/>
        </authorList>
    </citation>
    <scope>ACETYLATION [LARGE SCALE ANALYSIS] AT THR-2</scope>
    <scope>CLEAVAGE OF INITIATOR METHIONINE [LARGE SCALE ANALYSIS]</scope>
    <scope>IDENTIFICATION BY MASS SPECTROMETRY [LARGE SCALE ANALYSIS]</scope>
</reference>
<reference key="10">
    <citation type="journal article" date="2009" name="Science">
        <title>Lysine acetylation targets protein complexes and co-regulates major cellular functions.</title>
        <authorList>
            <person name="Choudhary C."/>
            <person name="Kumar C."/>
            <person name="Gnad F."/>
            <person name="Nielsen M.L."/>
            <person name="Rehman M."/>
            <person name="Walther T.C."/>
            <person name="Olsen J.V."/>
            <person name="Mann M."/>
        </authorList>
    </citation>
    <scope>ACETYLATION [LARGE SCALE ANALYSIS] AT LYS-260</scope>
    <scope>IDENTIFICATION BY MASS SPECTROMETRY [LARGE SCALE ANALYSIS]</scope>
</reference>
<reference key="11">
    <citation type="journal article" date="2010" name="EMBO J.">
        <title>Essential role of p18Hamlet/SRCAP-mediated histone H2A.Z chromatin incorporation in muscle differentiation.</title>
        <authorList>
            <person name="Cuadrado A."/>
            <person name="Corrado N."/>
            <person name="Perdiguero E."/>
            <person name="Lafarga V."/>
            <person name="Munoz-Canoves P."/>
            <person name="Nebreda A.R."/>
        </authorList>
    </citation>
    <scope>IDENTIFICATION IN THE SRCAP COMPLEX</scope>
</reference>
<reference key="12">
    <citation type="journal article" date="2015" name="Biochem. Biophys. Res. Commun.">
        <title>The actin family protein ARP6 contributes to the structure and the function of the nucleolus.</title>
        <authorList>
            <person name="Kitamura H."/>
            <person name="Matsumori H."/>
            <person name="Kalendova A."/>
            <person name="Hozak P."/>
            <person name="Goldberg I.G."/>
            <person name="Nakao M."/>
            <person name="Saitoh N."/>
            <person name="Harata M."/>
        </authorList>
    </citation>
    <scope>FUNCTION</scope>
    <scope>SUBCELLULAR LOCATION</scope>
</reference>
<name>ARP6_HUMAN</name>
<accession>Q9GZN1</accession>
<accession>B3KW37</accession>
<accession>B4DLG9</accession>
<accession>Q53GH2</accession>
<accession>Q9BY39</accession>
<accession>Q9H8H6</accession>
<proteinExistence type="evidence at protein level"/>
<feature type="initiator methionine" description="Removed" evidence="9">
    <location>
        <position position="1"/>
    </location>
</feature>
<feature type="chain" id="PRO_0000089105" description="Actin-related protein 6">
    <location>
        <begin position="2"/>
        <end position="396"/>
    </location>
</feature>
<feature type="modified residue" description="N-acetylthreonine" evidence="9">
    <location>
        <position position="2"/>
    </location>
</feature>
<feature type="modified residue" description="N6-acetyllysine" evidence="10">
    <location>
        <position position="260"/>
    </location>
</feature>
<feature type="splice variant" id="VSP_054637" description="In isoform 2." evidence="7">
    <original>AGALSAHRYFRDNPSELCCIIVDSGYSFTHIVPYCRSKKKKEAIIRINVGGKLLTN</original>
    <variation>GEFKFSLKLSYMTMDMNRVILIKSQNIKWHSWLAQWLTPVTPSVWEAEASRSLEFR</variation>
    <location>
        <begin position="127"/>
        <end position="182"/>
    </location>
</feature>
<feature type="splice variant" id="VSP_054638" description="In isoform 2." evidence="7">
    <location>
        <begin position="183"/>
        <end position="395"/>
    </location>
</feature>
<feature type="sequence conflict" description="In Ref. 4; BAD96679." evidence="8" ref="4">
    <original>R</original>
    <variation>G</variation>
    <location>
        <position position="218"/>
    </location>
</feature>
<feature type="sequence conflict" description="In Ref. 2; AAK14934." evidence="8" ref="2">
    <original>K</original>
    <variation>E</variation>
    <location>
        <position position="226"/>
    </location>
</feature>
<feature type="sequence conflict" description="In Ref. 2; AAK14934." evidence="8" ref="2">
    <original>V</original>
    <variation>A</variation>
    <location>
        <position position="237"/>
    </location>
</feature>
<dbReference type="EMBL" id="AB038229">
    <property type="protein sequence ID" value="BAB20762.1"/>
    <property type="molecule type" value="mRNA"/>
</dbReference>
<dbReference type="EMBL" id="AF212251">
    <property type="protein sequence ID" value="AAK14934.1"/>
    <property type="molecule type" value="mRNA"/>
</dbReference>
<dbReference type="EMBL" id="AK023495">
    <property type="protein sequence ID" value="BAB14588.1"/>
    <property type="molecule type" value="mRNA"/>
</dbReference>
<dbReference type="EMBL" id="AK023684">
    <property type="protein sequence ID" value="BAB14640.1"/>
    <property type="molecule type" value="mRNA"/>
</dbReference>
<dbReference type="EMBL" id="AK124075">
    <property type="protein sequence ID" value="BAG53999.1"/>
    <property type="molecule type" value="mRNA"/>
</dbReference>
<dbReference type="EMBL" id="AK296991">
    <property type="protein sequence ID" value="BAG59531.1"/>
    <property type="molecule type" value="mRNA"/>
</dbReference>
<dbReference type="EMBL" id="AK222959">
    <property type="protein sequence ID" value="BAD96679.1"/>
    <property type="molecule type" value="mRNA"/>
</dbReference>
<dbReference type="EMBL" id="CH471054">
    <property type="protein sequence ID" value="EAW97623.1"/>
    <property type="molecule type" value="Genomic_DNA"/>
</dbReference>
<dbReference type="EMBL" id="BC015107">
    <property type="protein sequence ID" value="AAH15107.1"/>
    <property type="molecule type" value="mRNA"/>
</dbReference>
<dbReference type="CCDS" id="CCDS9074.1">
    <molecule id="Q9GZN1-1"/>
</dbReference>
<dbReference type="RefSeq" id="NP_071941.1">
    <molecule id="Q9GZN1-1"/>
    <property type="nucleotide sequence ID" value="NM_022496.5"/>
</dbReference>
<dbReference type="RefSeq" id="XP_016875310.1">
    <property type="nucleotide sequence ID" value="XM_017019821.1"/>
</dbReference>
<dbReference type="PDB" id="6IGM">
    <property type="method" value="EM"/>
    <property type="resolution" value="4.00 A"/>
    <property type="chains" value="G=1-396"/>
</dbReference>
<dbReference type="PDB" id="8X15">
    <property type="method" value="EM"/>
    <property type="resolution" value="3.20 A"/>
    <property type="chains" value="K=1-396"/>
</dbReference>
<dbReference type="PDB" id="8X19">
    <property type="method" value="EM"/>
    <property type="resolution" value="3.20 A"/>
    <property type="chains" value="K=1-396"/>
</dbReference>
<dbReference type="PDB" id="8X1C">
    <property type="method" value="EM"/>
    <property type="resolution" value="3.20 A"/>
    <property type="chains" value="K=1-396"/>
</dbReference>
<dbReference type="PDBsum" id="6IGM"/>
<dbReference type="PDBsum" id="8X15"/>
<dbReference type="PDBsum" id="8X19"/>
<dbReference type="PDBsum" id="8X1C"/>
<dbReference type="EMDB" id="EMD-37984"/>
<dbReference type="EMDB" id="EMD-37988"/>
<dbReference type="EMDB" id="EMD-37990"/>
<dbReference type="EMDB" id="EMD-9668"/>
<dbReference type="SMR" id="Q9GZN1"/>
<dbReference type="BioGRID" id="122179">
    <property type="interactions" value="49"/>
</dbReference>
<dbReference type="ComplexPortal" id="CPX-974">
    <property type="entry name" value="SRCAP chromatin remodeling complex"/>
</dbReference>
<dbReference type="CORUM" id="Q9GZN1"/>
<dbReference type="FunCoup" id="Q9GZN1">
    <property type="interactions" value="1695"/>
</dbReference>
<dbReference type="IntAct" id="Q9GZN1">
    <property type="interactions" value="36"/>
</dbReference>
<dbReference type="MINT" id="Q9GZN1"/>
<dbReference type="STRING" id="9606.ENSP00000188312"/>
<dbReference type="iPTMnet" id="Q9GZN1"/>
<dbReference type="PhosphoSitePlus" id="Q9GZN1"/>
<dbReference type="BioMuta" id="ACTR6"/>
<dbReference type="DMDM" id="27923737"/>
<dbReference type="jPOST" id="Q9GZN1"/>
<dbReference type="MassIVE" id="Q9GZN1"/>
<dbReference type="PaxDb" id="9606-ENSP00000188312"/>
<dbReference type="PeptideAtlas" id="Q9GZN1"/>
<dbReference type="ProteomicsDB" id="80095">
    <molecule id="Q9GZN1-1"/>
</dbReference>
<dbReference type="Pumba" id="Q9GZN1"/>
<dbReference type="Antibodypedia" id="30297">
    <property type="antibodies" value="100 antibodies from 20 providers"/>
</dbReference>
<dbReference type="DNASU" id="64431"/>
<dbReference type="Ensembl" id="ENST00000188312.7">
    <molecule id="Q9GZN1-1"/>
    <property type="protein sequence ID" value="ENSP00000188312.2"/>
    <property type="gene ID" value="ENSG00000075089.10"/>
</dbReference>
<dbReference type="GeneID" id="64431"/>
<dbReference type="KEGG" id="hsa:64431"/>
<dbReference type="MANE-Select" id="ENST00000188312.7">
    <property type="protein sequence ID" value="ENSP00000188312.2"/>
    <property type="RefSeq nucleotide sequence ID" value="NM_022496.5"/>
    <property type="RefSeq protein sequence ID" value="NP_071941.1"/>
</dbReference>
<dbReference type="UCSC" id="uc001thb.3">
    <molecule id="Q9GZN1-1"/>
    <property type="organism name" value="human"/>
</dbReference>
<dbReference type="AGR" id="HGNC:24025"/>
<dbReference type="CTD" id="64431"/>
<dbReference type="DisGeNET" id="64431"/>
<dbReference type="GeneCards" id="ACTR6"/>
<dbReference type="HGNC" id="HGNC:24025">
    <property type="gene designation" value="ACTR6"/>
</dbReference>
<dbReference type="HPA" id="ENSG00000075089">
    <property type="expression patterns" value="Low tissue specificity"/>
</dbReference>
<dbReference type="MIM" id="619729">
    <property type="type" value="gene"/>
</dbReference>
<dbReference type="neXtProt" id="NX_Q9GZN1"/>
<dbReference type="OpenTargets" id="ENSG00000075089"/>
<dbReference type="PharmGKB" id="PA134984466"/>
<dbReference type="VEuPathDB" id="HostDB:ENSG00000075089"/>
<dbReference type="eggNOG" id="KOG0680">
    <property type="taxonomic scope" value="Eukaryota"/>
</dbReference>
<dbReference type="GeneTree" id="ENSGT00720000108833"/>
<dbReference type="HOGENOM" id="CLU_027965_1_1_1"/>
<dbReference type="InParanoid" id="Q9GZN1"/>
<dbReference type="OMA" id="FFEEYEC"/>
<dbReference type="OrthoDB" id="6220758at2759"/>
<dbReference type="PAN-GO" id="Q9GZN1">
    <property type="GO annotations" value="3 GO annotations based on evolutionary models"/>
</dbReference>
<dbReference type="PhylomeDB" id="Q9GZN1"/>
<dbReference type="TreeFam" id="TF105780"/>
<dbReference type="PathwayCommons" id="Q9GZN1"/>
<dbReference type="SignaLink" id="Q9GZN1"/>
<dbReference type="BioGRID-ORCS" id="64431">
    <property type="hits" value="646 hits in 1184 CRISPR screens"/>
</dbReference>
<dbReference type="ChiTaRS" id="ACTR6">
    <property type="organism name" value="human"/>
</dbReference>
<dbReference type="GenomeRNAi" id="64431"/>
<dbReference type="Pharos" id="Q9GZN1">
    <property type="development level" value="Tbio"/>
</dbReference>
<dbReference type="PRO" id="PR:Q9GZN1"/>
<dbReference type="Proteomes" id="UP000005640">
    <property type="component" value="Chromosome 12"/>
</dbReference>
<dbReference type="RNAct" id="Q9GZN1">
    <property type="molecule type" value="protein"/>
</dbReference>
<dbReference type="Bgee" id="ENSG00000075089">
    <property type="expression patterns" value="Expressed in ganglionic eminence and 188 other cell types or tissues"/>
</dbReference>
<dbReference type="ExpressionAtlas" id="Q9GZN1">
    <property type="expression patterns" value="baseline and differential"/>
</dbReference>
<dbReference type="GO" id="GO:0005737">
    <property type="term" value="C:cytoplasm"/>
    <property type="evidence" value="ECO:0007669"/>
    <property type="project" value="UniProtKB-KW"/>
</dbReference>
<dbReference type="GO" id="GO:0005856">
    <property type="term" value="C:cytoskeleton"/>
    <property type="evidence" value="ECO:0007669"/>
    <property type="project" value="UniProtKB-SubCell"/>
</dbReference>
<dbReference type="GO" id="GO:0005730">
    <property type="term" value="C:nucleolus"/>
    <property type="evidence" value="ECO:0000314"/>
    <property type="project" value="UniProtKB"/>
</dbReference>
<dbReference type="GO" id="GO:0000786">
    <property type="term" value="C:nucleosome"/>
    <property type="evidence" value="ECO:0000303"/>
    <property type="project" value="ComplexPortal"/>
</dbReference>
<dbReference type="GO" id="GO:0005634">
    <property type="term" value="C:nucleus"/>
    <property type="evidence" value="ECO:0000250"/>
    <property type="project" value="AgBase"/>
</dbReference>
<dbReference type="GO" id="GO:0000812">
    <property type="term" value="C:Swr1 complex"/>
    <property type="evidence" value="ECO:0000318"/>
    <property type="project" value="GO_Central"/>
</dbReference>
<dbReference type="GO" id="GO:0031491">
    <property type="term" value="F:nucleosome binding"/>
    <property type="evidence" value="ECO:0000318"/>
    <property type="project" value="GO_Central"/>
</dbReference>
<dbReference type="GO" id="GO:0006338">
    <property type="term" value="P:chromatin remodeling"/>
    <property type="evidence" value="ECO:0000303"/>
    <property type="project" value="ComplexPortal"/>
</dbReference>
<dbReference type="GO" id="GO:0016479">
    <property type="term" value="P:negative regulation of transcription by RNA polymerase I"/>
    <property type="evidence" value="ECO:0000250"/>
    <property type="project" value="UniProtKB"/>
</dbReference>
<dbReference type="GO" id="GO:0007000">
    <property type="term" value="P:nucleolus organization"/>
    <property type="evidence" value="ECO:0000315"/>
    <property type="project" value="UniProtKB"/>
</dbReference>
<dbReference type="GO" id="GO:0045943">
    <property type="term" value="P:positive regulation of transcription by RNA polymerase I"/>
    <property type="evidence" value="ECO:0000250"/>
    <property type="project" value="UniProtKB"/>
</dbReference>
<dbReference type="GO" id="GO:0006355">
    <property type="term" value="P:regulation of DNA-templated transcription"/>
    <property type="evidence" value="ECO:0000303"/>
    <property type="project" value="ComplexPortal"/>
</dbReference>
<dbReference type="CDD" id="cd10210">
    <property type="entry name" value="ASKHA_NBD_Arp6"/>
    <property type="match status" value="1"/>
</dbReference>
<dbReference type="FunFam" id="2.30.36.70:FF:000003">
    <property type="entry name" value="Actin-related protein 6"/>
    <property type="match status" value="1"/>
</dbReference>
<dbReference type="FunFam" id="3.30.420.40:FF:000599">
    <property type="entry name" value="Actin-related protein 6"/>
    <property type="match status" value="1"/>
</dbReference>
<dbReference type="FunFam" id="3.30.420.40:FF:000601">
    <property type="entry name" value="Actin-related protein 6"/>
    <property type="match status" value="1"/>
</dbReference>
<dbReference type="FunFam" id="3.30.420.40:FF:000602">
    <property type="entry name" value="Actin-related protein 6"/>
    <property type="match status" value="1"/>
</dbReference>
<dbReference type="FunFam" id="3.90.640.10:FF:000014">
    <property type="entry name" value="Putative actin-related protein 6"/>
    <property type="match status" value="1"/>
</dbReference>
<dbReference type="Gene3D" id="3.30.420.40">
    <property type="match status" value="2"/>
</dbReference>
<dbReference type="Gene3D" id="2.30.36.70">
    <property type="entry name" value="Actin, Chain A, domain 2"/>
    <property type="match status" value="1"/>
</dbReference>
<dbReference type="Gene3D" id="3.90.640.10">
    <property type="entry name" value="Actin, Chain A, domain 4"/>
    <property type="match status" value="1"/>
</dbReference>
<dbReference type="InterPro" id="IPR004000">
    <property type="entry name" value="Actin"/>
</dbReference>
<dbReference type="InterPro" id="IPR043129">
    <property type="entry name" value="ATPase_NBD"/>
</dbReference>
<dbReference type="PANTHER" id="PTHR11937">
    <property type="entry name" value="ACTIN"/>
    <property type="match status" value="1"/>
</dbReference>
<dbReference type="Pfam" id="PF00022">
    <property type="entry name" value="Actin"/>
    <property type="match status" value="1"/>
</dbReference>
<dbReference type="SMART" id="SM00268">
    <property type="entry name" value="ACTIN"/>
    <property type="match status" value="1"/>
</dbReference>
<dbReference type="SUPFAM" id="SSF53067">
    <property type="entry name" value="Actin-like ATPase domain"/>
    <property type="match status" value="2"/>
</dbReference>
<comment type="function">
    <text evidence="2 6">Required for formation and/or maintenance of proper nucleolar structure and function (PubMed:26164235). Plays a dual role in the regulation of ribosomal DNA (rDNA) transcription (By similarity). In the presence of high glucose, maintains active rDNA transcription through H2A.Z deposition and under glucose starvation, is required for the repression of rDNA transcription, and this function may be independent of H2A.Z (By similarity).</text>
</comment>
<comment type="subunit">
    <text evidence="3 4 5">Component of the chromatin-remodeling SRCAP complex composed of at least SRCAP, DMAP1, RUVBL1, RUVBL2, ACTL6A, YEATS4, ACTR6 and ZNHIT1 (PubMed:15647280, PubMed:20473270). Interacts with CBX1, CBX3 and CBX5 (PubMed:16487625).</text>
</comment>
<comment type="interaction">
    <interactant intactId="EBI-769329">
        <id>Q9GZN1</id>
    </interactant>
    <interactant intactId="EBI-1199859">
        <id>P0C0S5</id>
        <label>H2AZ1</label>
    </interactant>
    <organismsDiffer>false</organismsDiffer>
    <experiments>6</experiments>
</comment>
<comment type="interaction">
    <interactant intactId="EBI-769329">
        <id>Q9GZN1</id>
    </interactant>
    <interactant intactId="EBI-347522">
        <id>O43257</id>
        <label>ZNHIT1</label>
    </interactant>
    <organismsDiffer>false</organismsDiffer>
    <experiments>7</experiments>
</comment>
<comment type="subcellular location">
    <subcellularLocation>
        <location evidence="1">Cytoplasm</location>
        <location evidence="1">Cytoskeleton</location>
    </subcellularLocation>
    <subcellularLocation>
        <location evidence="4">Nucleus</location>
    </subcellularLocation>
    <subcellularLocation>
        <location evidence="6">Nucleus</location>
        <location evidence="6">Nucleolus</location>
    </subcellularLocation>
    <text evidence="4">Colocalizes with HP1 family proteins at pericentric heterochromatin.</text>
</comment>
<comment type="alternative products">
    <event type="alternative splicing"/>
    <isoform>
        <id>Q9GZN1-1</id>
        <name>1</name>
        <sequence type="displayed"/>
    </isoform>
    <isoform>
        <id>Q9GZN1-2</id>
        <name>2</name>
        <sequence type="described" ref="VSP_054637 VSP_054638"/>
    </isoform>
</comment>
<comment type="similarity">
    <text evidence="8">Belongs to the actin family. ARP6 subfamily.</text>
</comment>
<keyword id="KW-0002">3D-structure</keyword>
<keyword id="KW-0007">Acetylation</keyword>
<keyword id="KW-0010">Activator</keyword>
<keyword id="KW-0025">Alternative splicing</keyword>
<keyword id="KW-0963">Cytoplasm</keyword>
<keyword id="KW-0206">Cytoskeleton</keyword>
<keyword id="KW-0539">Nucleus</keyword>
<keyword id="KW-1267">Proteomics identification</keyword>
<keyword id="KW-1185">Reference proteome</keyword>
<keyword id="KW-0678">Repressor</keyword>
<keyword id="KW-0804">Transcription</keyword>
<keyword id="KW-0805">Transcription regulation</keyword>
<gene>
    <name type="primary">ACTR6</name>
    <name type="ORF">CDA12</name>
</gene>
<organism>
    <name type="scientific">Homo sapiens</name>
    <name type="common">Human</name>
    <dbReference type="NCBI Taxonomy" id="9606"/>
    <lineage>
        <taxon>Eukaryota</taxon>
        <taxon>Metazoa</taxon>
        <taxon>Chordata</taxon>
        <taxon>Craniata</taxon>
        <taxon>Vertebrata</taxon>
        <taxon>Euteleostomi</taxon>
        <taxon>Mammalia</taxon>
        <taxon>Eutheria</taxon>
        <taxon>Euarchontoglires</taxon>
        <taxon>Primates</taxon>
        <taxon>Haplorrhini</taxon>
        <taxon>Catarrhini</taxon>
        <taxon>Hominidae</taxon>
        <taxon>Homo</taxon>
    </lineage>
</organism>
<evidence type="ECO:0000250" key="1">
    <source>
        <dbReference type="UniProtKB" id="P45890"/>
    </source>
</evidence>
<evidence type="ECO:0000250" key="2">
    <source>
        <dbReference type="UniProtKB" id="Q9DEE9"/>
    </source>
</evidence>
<evidence type="ECO:0000269" key="3">
    <source>
    </source>
</evidence>
<evidence type="ECO:0000269" key="4">
    <source>
    </source>
</evidence>
<evidence type="ECO:0000269" key="5">
    <source>
    </source>
</evidence>
<evidence type="ECO:0000269" key="6">
    <source>
    </source>
</evidence>
<evidence type="ECO:0000303" key="7">
    <source>
    </source>
</evidence>
<evidence type="ECO:0000305" key="8"/>
<evidence type="ECO:0007744" key="9">
    <source>
    </source>
</evidence>
<evidence type="ECO:0007744" key="10">
    <source>
    </source>
</evidence>
<sequence length="396" mass="45810">MTTLVLDNGAYNAKIGYSHENVSVIPNCQFRSKTARLKTFTANQIDEIKDPSGLFYILPFQKGYLVNWDVQRQVWDYLFGKEMYQVDFLDTNIIITEPYFNFTSIQESMNEILFEEYQFQAVLRVNAGALSAHRYFRDNPSELCCIIVDSGYSFTHIVPYCRSKKKKEAIIRINVGGKLLTNHLKEIISYRQLHVMDETHVINQVKEDVCYVSQDFYRDMDIAKLKGEENTVMIDYVLPDFSTIKKGFCKPREEMVLSGKYKSGEQILRLANERFAVPEILFNPSDIGIQEMGIPEAIVYSIQNLPEEMQPHFFKNIVLTGGNSLFPGFRDRVYSEVRCLTPTDYDVSVVLPENPITYAWEGGKLISENDDFEDMVVTREDYEENGHSVCEEKFDI</sequence>